<organism>
    <name type="scientific">Helicobacter pylori (strain J99 / ATCC 700824)</name>
    <name type="common">Campylobacter pylori J99</name>
    <dbReference type="NCBI Taxonomy" id="85963"/>
    <lineage>
        <taxon>Bacteria</taxon>
        <taxon>Pseudomonadati</taxon>
        <taxon>Campylobacterota</taxon>
        <taxon>Epsilonproteobacteria</taxon>
        <taxon>Campylobacterales</taxon>
        <taxon>Helicobacteraceae</taxon>
        <taxon>Helicobacter</taxon>
    </lineage>
</organism>
<protein>
    <recommendedName>
        <fullName evidence="1">GTPase Obg</fullName>
        <ecNumber evidence="1">3.6.5.-</ecNumber>
    </recommendedName>
    <alternativeName>
        <fullName evidence="1">GTP-binding protein Obg</fullName>
    </alternativeName>
</protein>
<name>OBG_HELPJ</name>
<evidence type="ECO:0000255" key="1">
    <source>
        <dbReference type="HAMAP-Rule" id="MF_01454"/>
    </source>
</evidence>
<evidence type="ECO:0000255" key="2">
    <source>
        <dbReference type="PROSITE-ProRule" id="PRU01231"/>
    </source>
</evidence>
<proteinExistence type="inferred from homology"/>
<comment type="function">
    <text evidence="1">An essential GTPase which binds GTP, GDP and possibly (p)ppGpp with moderate affinity, with high nucleotide exchange rates and a fairly low GTP hydrolysis rate. Plays a role in control of the cell cycle, stress response, ribosome biogenesis and in those bacteria that undergo differentiation, in morphogenesis control.</text>
</comment>
<comment type="cofactor">
    <cofactor evidence="1">
        <name>Mg(2+)</name>
        <dbReference type="ChEBI" id="CHEBI:18420"/>
    </cofactor>
</comment>
<comment type="subunit">
    <text evidence="1">Monomer.</text>
</comment>
<comment type="subcellular location">
    <subcellularLocation>
        <location evidence="1">Cytoplasm</location>
    </subcellularLocation>
</comment>
<comment type="similarity">
    <text evidence="1">Belongs to the TRAFAC class OBG-HflX-like GTPase superfamily. OBG GTPase family.</text>
</comment>
<sequence length="360" mass="38873">MFVDSVEIIIASGKGGPGMVSFRREKFVIKGGPDGGDGGDGGDVYFEVDNNTDTLASFRGTKHHKAKNGAPGGTRNCAGKKGEDKIIVVPPGTQVFVGDELWLDLVEPKERVLALKGGKGGLGNAHFKSATKQQPTYAQKGLEGVEKCVRLELKLIADIGLVGFPNAGKSTLISTISNAKPKIANYEFTTLVPNLGVVSVDEKSEFLMADIPGIIEGASEGKGLGISFLKHIERTKVLAFVLDASRLDLGIKEQYKRLRLELEKFSPTLANKPFGVLLNKCDVVENINEMTKDFCAFLNLEAQKLNAFDLEPYLGFLHPNLTSDFENNPNEQSALFVLPLSAVSALNTHALKFVLLKALQ</sequence>
<feature type="chain" id="PRO_0000205440" description="GTPase Obg">
    <location>
        <begin position="1"/>
        <end position="360"/>
    </location>
</feature>
<feature type="domain" description="Obg" evidence="2">
    <location>
        <begin position="1"/>
        <end position="156"/>
    </location>
</feature>
<feature type="domain" description="OBG-type G" evidence="1">
    <location>
        <begin position="157"/>
        <end position="360"/>
    </location>
</feature>
<feature type="binding site" evidence="1">
    <location>
        <begin position="163"/>
        <end position="170"/>
    </location>
    <ligand>
        <name>GTP</name>
        <dbReference type="ChEBI" id="CHEBI:37565"/>
    </ligand>
</feature>
<feature type="binding site" evidence="1">
    <location>
        <position position="170"/>
    </location>
    <ligand>
        <name>Mg(2+)</name>
        <dbReference type="ChEBI" id="CHEBI:18420"/>
    </ligand>
</feature>
<feature type="binding site" evidence="1">
    <location>
        <begin position="188"/>
        <end position="192"/>
    </location>
    <ligand>
        <name>GTP</name>
        <dbReference type="ChEBI" id="CHEBI:37565"/>
    </ligand>
</feature>
<feature type="binding site" evidence="1">
    <location>
        <position position="190"/>
    </location>
    <ligand>
        <name>Mg(2+)</name>
        <dbReference type="ChEBI" id="CHEBI:18420"/>
    </ligand>
</feature>
<feature type="binding site" evidence="1">
    <location>
        <begin position="210"/>
        <end position="213"/>
    </location>
    <ligand>
        <name>GTP</name>
        <dbReference type="ChEBI" id="CHEBI:37565"/>
    </ligand>
</feature>
<feature type="binding site" evidence="1">
    <location>
        <begin position="279"/>
        <end position="282"/>
    </location>
    <ligand>
        <name>GTP</name>
        <dbReference type="ChEBI" id="CHEBI:37565"/>
    </ligand>
</feature>
<feature type="binding site" evidence="1">
    <location>
        <begin position="341"/>
        <end position="343"/>
    </location>
    <ligand>
        <name>GTP</name>
        <dbReference type="ChEBI" id="CHEBI:37565"/>
    </ligand>
</feature>
<dbReference type="EC" id="3.6.5.-" evidence="1"/>
<dbReference type="EMBL" id="AE001439">
    <property type="protein sequence ID" value="AAD05858.1"/>
    <property type="molecule type" value="Genomic_DNA"/>
</dbReference>
<dbReference type="PIR" id="B71952">
    <property type="entry name" value="B71952"/>
</dbReference>
<dbReference type="RefSeq" id="WP_000497230.1">
    <property type="nucleotide sequence ID" value="NC_000921.1"/>
</dbReference>
<dbReference type="SMR" id="Q9ZMD3"/>
<dbReference type="KEGG" id="hpj:jhp_0288"/>
<dbReference type="PATRIC" id="fig|85963.30.peg.725"/>
<dbReference type="eggNOG" id="COG0536">
    <property type="taxonomic scope" value="Bacteria"/>
</dbReference>
<dbReference type="Proteomes" id="UP000000804">
    <property type="component" value="Chromosome"/>
</dbReference>
<dbReference type="GO" id="GO:0005737">
    <property type="term" value="C:cytoplasm"/>
    <property type="evidence" value="ECO:0007669"/>
    <property type="project" value="UniProtKB-SubCell"/>
</dbReference>
<dbReference type="GO" id="GO:0005525">
    <property type="term" value="F:GTP binding"/>
    <property type="evidence" value="ECO:0007669"/>
    <property type="project" value="UniProtKB-UniRule"/>
</dbReference>
<dbReference type="GO" id="GO:0003924">
    <property type="term" value="F:GTPase activity"/>
    <property type="evidence" value="ECO:0007669"/>
    <property type="project" value="UniProtKB-UniRule"/>
</dbReference>
<dbReference type="GO" id="GO:0000287">
    <property type="term" value="F:magnesium ion binding"/>
    <property type="evidence" value="ECO:0007669"/>
    <property type="project" value="InterPro"/>
</dbReference>
<dbReference type="GO" id="GO:0042254">
    <property type="term" value="P:ribosome biogenesis"/>
    <property type="evidence" value="ECO:0007669"/>
    <property type="project" value="UniProtKB-UniRule"/>
</dbReference>
<dbReference type="CDD" id="cd01898">
    <property type="entry name" value="Obg"/>
    <property type="match status" value="1"/>
</dbReference>
<dbReference type="FunFam" id="2.70.210.12:FF:000001">
    <property type="entry name" value="GTPase Obg"/>
    <property type="match status" value="1"/>
</dbReference>
<dbReference type="Gene3D" id="2.70.210.12">
    <property type="entry name" value="GTP1/OBG domain"/>
    <property type="match status" value="1"/>
</dbReference>
<dbReference type="Gene3D" id="3.40.50.300">
    <property type="entry name" value="P-loop containing nucleotide triphosphate hydrolases"/>
    <property type="match status" value="1"/>
</dbReference>
<dbReference type="HAMAP" id="MF_01454">
    <property type="entry name" value="GTPase_Obg"/>
    <property type="match status" value="1"/>
</dbReference>
<dbReference type="InterPro" id="IPR031167">
    <property type="entry name" value="G_OBG"/>
</dbReference>
<dbReference type="InterPro" id="IPR006073">
    <property type="entry name" value="GTP-bd"/>
</dbReference>
<dbReference type="InterPro" id="IPR014100">
    <property type="entry name" value="GTP-bd_Obg/CgtA"/>
</dbReference>
<dbReference type="InterPro" id="IPR006074">
    <property type="entry name" value="GTP1-OBG_CS"/>
</dbReference>
<dbReference type="InterPro" id="IPR006169">
    <property type="entry name" value="GTP1_OBG_dom"/>
</dbReference>
<dbReference type="InterPro" id="IPR036726">
    <property type="entry name" value="GTP1_OBG_dom_sf"/>
</dbReference>
<dbReference type="InterPro" id="IPR045086">
    <property type="entry name" value="OBG_GTPase"/>
</dbReference>
<dbReference type="InterPro" id="IPR027417">
    <property type="entry name" value="P-loop_NTPase"/>
</dbReference>
<dbReference type="NCBIfam" id="TIGR02729">
    <property type="entry name" value="Obg_CgtA"/>
    <property type="match status" value="1"/>
</dbReference>
<dbReference type="NCBIfam" id="NF008955">
    <property type="entry name" value="PRK12297.1"/>
    <property type="match status" value="1"/>
</dbReference>
<dbReference type="NCBIfam" id="NF008956">
    <property type="entry name" value="PRK12299.1"/>
    <property type="match status" value="1"/>
</dbReference>
<dbReference type="PANTHER" id="PTHR11702">
    <property type="entry name" value="DEVELOPMENTALLY REGULATED GTP-BINDING PROTEIN-RELATED"/>
    <property type="match status" value="1"/>
</dbReference>
<dbReference type="PANTHER" id="PTHR11702:SF31">
    <property type="entry name" value="MITOCHONDRIAL RIBOSOME-ASSOCIATED GTPASE 2"/>
    <property type="match status" value="1"/>
</dbReference>
<dbReference type="Pfam" id="PF01018">
    <property type="entry name" value="GTP1_OBG"/>
    <property type="match status" value="1"/>
</dbReference>
<dbReference type="Pfam" id="PF01926">
    <property type="entry name" value="MMR_HSR1"/>
    <property type="match status" value="1"/>
</dbReference>
<dbReference type="PIRSF" id="PIRSF002401">
    <property type="entry name" value="GTP_bd_Obg/CgtA"/>
    <property type="match status" value="1"/>
</dbReference>
<dbReference type="PRINTS" id="PR00326">
    <property type="entry name" value="GTP1OBG"/>
</dbReference>
<dbReference type="SUPFAM" id="SSF82051">
    <property type="entry name" value="Obg GTP-binding protein N-terminal domain"/>
    <property type="match status" value="1"/>
</dbReference>
<dbReference type="SUPFAM" id="SSF52540">
    <property type="entry name" value="P-loop containing nucleoside triphosphate hydrolases"/>
    <property type="match status" value="1"/>
</dbReference>
<dbReference type="PROSITE" id="PS51710">
    <property type="entry name" value="G_OBG"/>
    <property type="match status" value="1"/>
</dbReference>
<dbReference type="PROSITE" id="PS00905">
    <property type="entry name" value="GTP1_OBG"/>
    <property type="match status" value="1"/>
</dbReference>
<dbReference type="PROSITE" id="PS51883">
    <property type="entry name" value="OBG"/>
    <property type="match status" value="1"/>
</dbReference>
<keyword id="KW-0963">Cytoplasm</keyword>
<keyword id="KW-0342">GTP-binding</keyword>
<keyword id="KW-0378">Hydrolase</keyword>
<keyword id="KW-0460">Magnesium</keyword>
<keyword id="KW-0479">Metal-binding</keyword>
<keyword id="KW-0547">Nucleotide-binding</keyword>
<reference key="1">
    <citation type="journal article" date="1999" name="Nature">
        <title>Genomic sequence comparison of two unrelated isolates of the human gastric pathogen Helicobacter pylori.</title>
        <authorList>
            <person name="Alm R.A."/>
            <person name="Ling L.-S.L."/>
            <person name="Moir D.T."/>
            <person name="King B.L."/>
            <person name="Brown E.D."/>
            <person name="Doig P.C."/>
            <person name="Smith D.R."/>
            <person name="Noonan B."/>
            <person name="Guild B.C."/>
            <person name="deJonge B.L."/>
            <person name="Carmel G."/>
            <person name="Tummino P.J."/>
            <person name="Caruso A."/>
            <person name="Uria-Nickelsen M."/>
            <person name="Mills D.M."/>
            <person name="Ives C."/>
            <person name="Gibson R."/>
            <person name="Merberg D."/>
            <person name="Mills S.D."/>
            <person name="Jiang Q."/>
            <person name="Taylor D.E."/>
            <person name="Vovis G.F."/>
            <person name="Trust T.J."/>
        </authorList>
    </citation>
    <scope>NUCLEOTIDE SEQUENCE [LARGE SCALE GENOMIC DNA]</scope>
    <source>
        <strain>J99 / ATCC 700824</strain>
    </source>
</reference>
<accession>Q9ZMD3</accession>
<gene>
    <name evidence="1" type="primary">obg</name>
    <name type="ordered locus">jhp_0288</name>
</gene>